<feature type="signal peptide" evidence="2">
    <location>
        <begin position="1"/>
        <end position="22"/>
    </location>
</feature>
<feature type="propeptide" id="PRO_0000400751" evidence="3 4">
    <location>
        <begin position="23"/>
        <end position="48"/>
    </location>
</feature>
<feature type="peptide" id="PRO_0000400752" description="U4-theraphotoxin-Hhn1a">
    <location>
        <begin position="49"/>
        <end position="85"/>
    </location>
</feature>
<feature type="disulfide bond" evidence="1">
    <location>
        <begin position="52"/>
        <end position="66"/>
    </location>
</feature>
<feature type="disulfide bond" evidence="1">
    <location>
        <begin position="56"/>
        <end position="77"/>
    </location>
</feature>
<feature type="disulfide bond" evidence="1">
    <location>
        <begin position="71"/>
        <end position="82"/>
    </location>
</feature>
<accession>D2Y2K5</accession>
<name>H2A18_CYRHA</name>
<reference key="1">
    <citation type="journal article" date="2010" name="J. Proteome Res.">
        <title>Molecular diversification of peptide toxins from the tarantula Haplopelma hainanum (Ornithoctonus hainana) venom based on transcriptomic, peptidomic, and genomic analyses.</title>
        <authorList>
            <person name="Tang X."/>
            <person name="Zhang Y."/>
            <person name="Hu W."/>
            <person name="Xu D."/>
            <person name="Tao H."/>
            <person name="Yang X."/>
            <person name="Li Y."/>
            <person name="Jiang L."/>
            <person name="Liang S."/>
        </authorList>
    </citation>
    <scope>NUCLEOTIDE SEQUENCE [LARGE SCALE GENOMIC DNA]</scope>
    <scope>PROTEIN SEQUENCE OF 49-85</scope>
    <scope>IDENTIFICATION BY MASS SPECTROMETRY</scope>
    <source>
        <tissue>Venom</tissue>
        <tissue>Venom gland</tissue>
    </source>
</reference>
<reference key="2">
    <citation type="journal article" date="2010" name="Dong Wu Xue Yan Jiu">
        <title>Isolation and characterization of Hainantoxin-II, a new neurotoxic peptide from the Chinese bird spider (Haplopelma hainanum).</title>
        <authorList>
            <person name="Pan J.Y."/>
            <person name="Yu Z.Q."/>
        </authorList>
    </citation>
    <scope>PROTEIN SEQUENCE OF 49-85</scope>
    <scope>FUNCTION</scope>
    <scope>MASS SPECTROMETRY</scope>
    <scope>TOXIC DOSE</scope>
    <source>
        <tissue>Venom</tissue>
    </source>
</reference>
<keyword id="KW-0903">Direct protein sequencing</keyword>
<keyword id="KW-1015">Disulfide bond</keyword>
<keyword id="KW-0528">Neurotoxin</keyword>
<keyword id="KW-0629">Postsynaptic neurotoxin</keyword>
<keyword id="KW-0964">Secreted</keyword>
<keyword id="KW-0732">Signal</keyword>
<keyword id="KW-0800">Toxin</keyword>
<evidence type="ECO:0000250" key="1"/>
<evidence type="ECO:0000255" key="2"/>
<evidence type="ECO:0000269" key="3">
    <source>
    </source>
</evidence>
<evidence type="ECO:0000269" key="4">
    <source>
    </source>
</evidence>
<evidence type="ECO:0000305" key="5"/>
<sequence>MKVTLISILTCAAVLVLHTTAAEELEAESQLMEVGMPDTELAAVDEERLFECSVSCEIEKEGNKDCKKKKCKGGWKCKFNMCVKV</sequence>
<comment type="function">
    <text evidence="4">Neurotoxin active on both insects and mammals.</text>
</comment>
<comment type="subunit">
    <text>Monomer.</text>
</comment>
<comment type="subcellular location">
    <subcellularLocation>
        <location>Secreted</location>
    </subcellularLocation>
</comment>
<comment type="tissue specificity">
    <text>Expressed by the venom gland.</text>
</comment>
<comment type="mass spectrometry"/>
<comment type="toxic dose">
    <text evidence="4">LD(50) is 1.41 mg/kg by intracerebroventricular injection into mice.</text>
</comment>
<comment type="toxic dose">
    <text evidence="4">PD(50) is 16 mg/kg in cockroaches.</text>
</comment>
<comment type="similarity">
    <text evidence="5">Belongs to the neurotoxin 12 (Hwtx-2) family. 02 (Hwtx-2) subfamily.</text>
</comment>
<protein>
    <recommendedName>
        <fullName>U4-theraphotoxin-Hhn1a</fullName>
        <shortName>U4-TRTX-Hhn1a</shortName>
    </recommendedName>
    <alternativeName>
        <fullName>Hainantoxin-II.18</fullName>
        <shortName>HNTX-II.18</shortName>
    </alternativeName>
    <alternativeName>
        <fullName>Peptide F8-20.15</fullName>
    </alternativeName>
</protein>
<organism>
    <name type="scientific">Cyriopagopus hainanus</name>
    <name type="common">Chinese bird spider</name>
    <name type="synonym">Haplopelma hainanum</name>
    <dbReference type="NCBI Taxonomy" id="209901"/>
    <lineage>
        <taxon>Eukaryota</taxon>
        <taxon>Metazoa</taxon>
        <taxon>Ecdysozoa</taxon>
        <taxon>Arthropoda</taxon>
        <taxon>Chelicerata</taxon>
        <taxon>Arachnida</taxon>
        <taxon>Araneae</taxon>
        <taxon>Mygalomorphae</taxon>
        <taxon>Theraphosidae</taxon>
        <taxon>Haplopelma</taxon>
    </lineage>
</organism>
<dbReference type="EMBL" id="GU293082">
    <property type="protein sequence ID" value="ADB56898.1"/>
    <property type="molecule type" value="Genomic_DNA"/>
</dbReference>
<dbReference type="SMR" id="D2Y2K5"/>
<dbReference type="ArachnoServer" id="AS001783">
    <property type="toxin name" value="U4-theraphotoxin-Hhn1a"/>
</dbReference>
<dbReference type="GO" id="GO:0005576">
    <property type="term" value="C:extracellular region"/>
    <property type="evidence" value="ECO:0007669"/>
    <property type="project" value="UniProtKB-SubCell"/>
</dbReference>
<dbReference type="GO" id="GO:0035792">
    <property type="term" value="C:host cell postsynaptic membrane"/>
    <property type="evidence" value="ECO:0007669"/>
    <property type="project" value="UniProtKB-KW"/>
</dbReference>
<dbReference type="GO" id="GO:0090729">
    <property type="term" value="F:toxin activity"/>
    <property type="evidence" value="ECO:0007669"/>
    <property type="project" value="UniProtKB-KW"/>
</dbReference>
<dbReference type="InterPro" id="IPR012625">
    <property type="entry name" value="Hwtx-2-like"/>
</dbReference>
<dbReference type="Pfam" id="PF08089">
    <property type="entry name" value="Toxin_20"/>
    <property type="match status" value="1"/>
</dbReference>
<dbReference type="SUPFAM" id="SSF57059">
    <property type="entry name" value="omega toxin-like"/>
    <property type="match status" value="1"/>
</dbReference>
<dbReference type="PROSITE" id="PS60022">
    <property type="entry name" value="HWTX_2"/>
    <property type="match status" value="1"/>
</dbReference>
<proteinExistence type="evidence at protein level"/>